<organism>
    <name type="scientific">Sinorhizobium medicae (strain WSM419)</name>
    <name type="common">Ensifer medicae</name>
    <dbReference type="NCBI Taxonomy" id="366394"/>
    <lineage>
        <taxon>Bacteria</taxon>
        <taxon>Pseudomonadati</taxon>
        <taxon>Pseudomonadota</taxon>
        <taxon>Alphaproteobacteria</taxon>
        <taxon>Hyphomicrobiales</taxon>
        <taxon>Rhizobiaceae</taxon>
        <taxon>Sinorhizobium/Ensifer group</taxon>
        <taxon>Sinorhizobium</taxon>
    </lineage>
</organism>
<dbReference type="EC" id="7.1.1.-" evidence="1"/>
<dbReference type="EMBL" id="CP000738">
    <property type="protein sequence ID" value="ABR59746.1"/>
    <property type="molecule type" value="Genomic_DNA"/>
</dbReference>
<dbReference type="RefSeq" id="WP_011975084.1">
    <property type="nucleotide sequence ID" value="NC_009636.1"/>
</dbReference>
<dbReference type="RefSeq" id="YP_001326581.1">
    <property type="nucleotide sequence ID" value="NC_009636.1"/>
</dbReference>
<dbReference type="SMR" id="A6U7W6"/>
<dbReference type="STRING" id="366394.Smed_0891"/>
<dbReference type="KEGG" id="smd:Smed_0891"/>
<dbReference type="PATRIC" id="fig|366394.8.peg.4005"/>
<dbReference type="eggNOG" id="COG0649">
    <property type="taxonomic scope" value="Bacteria"/>
</dbReference>
<dbReference type="HOGENOM" id="CLU_015134_1_1_5"/>
<dbReference type="OrthoDB" id="9801496at2"/>
<dbReference type="Proteomes" id="UP000001108">
    <property type="component" value="Chromosome"/>
</dbReference>
<dbReference type="GO" id="GO:0005886">
    <property type="term" value="C:plasma membrane"/>
    <property type="evidence" value="ECO:0007669"/>
    <property type="project" value="UniProtKB-SubCell"/>
</dbReference>
<dbReference type="GO" id="GO:0051287">
    <property type="term" value="F:NAD binding"/>
    <property type="evidence" value="ECO:0007669"/>
    <property type="project" value="InterPro"/>
</dbReference>
<dbReference type="GO" id="GO:0050136">
    <property type="term" value="F:NADH:ubiquinone reductase (non-electrogenic) activity"/>
    <property type="evidence" value="ECO:0007669"/>
    <property type="project" value="UniProtKB-UniRule"/>
</dbReference>
<dbReference type="GO" id="GO:0048038">
    <property type="term" value="F:quinone binding"/>
    <property type="evidence" value="ECO:0007669"/>
    <property type="project" value="UniProtKB-KW"/>
</dbReference>
<dbReference type="FunFam" id="1.10.645.10:FF:000005">
    <property type="entry name" value="NADH-quinone oxidoreductase subunit D"/>
    <property type="match status" value="1"/>
</dbReference>
<dbReference type="Gene3D" id="1.10.645.10">
    <property type="entry name" value="Cytochrome-c3 Hydrogenase, chain B"/>
    <property type="match status" value="1"/>
</dbReference>
<dbReference type="HAMAP" id="MF_01358">
    <property type="entry name" value="NDH1_NuoD"/>
    <property type="match status" value="1"/>
</dbReference>
<dbReference type="InterPro" id="IPR001135">
    <property type="entry name" value="NADH_Q_OxRdtase_suD"/>
</dbReference>
<dbReference type="InterPro" id="IPR014029">
    <property type="entry name" value="NADH_UbQ_OxRdtase_49kDa_CS"/>
</dbReference>
<dbReference type="InterPro" id="IPR022885">
    <property type="entry name" value="NDH1_su_D/H"/>
</dbReference>
<dbReference type="InterPro" id="IPR029014">
    <property type="entry name" value="NiFe-Hase_large"/>
</dbReference>
<dbReference type="NCBIfam" id="TIGR01962">
    <property type="entry name" value="NuoD"/>
    <property type="match status" value="1"/>
</dbReference>
<dbReference type="NCBIfam" id="NF004739">
    <property type="entry name" value="PRK06075.1"/>
    <property type="match status" value="1"/>
</dbReference>
<dbReference type="PANTHER" id="PTHR11993:SF10">
    <property type="entry name" value="NADH DEHYDROGENASE [UBIQUINONE] IRON-SULFUR PROTEIN 2, MITOCHONDRIAL"/>
    <property type="match status" value="1"/>
</dbReference>
<dbReference type="PANTHER" id="PTHR11993">
    <property type="entry name" value="NADH-UBIQUINONE OXIDOREDUCTASE 49 KDA SUBUNIT"/>
    <property type="match status" value="1"/>
</dbReference>
<dbReference type="Pfam" id="PF00346">
    <property type="entry name" value="Complex1_49kDa"/>
    <property type="match status" value="1"/>
</dbReference>
<dbReference type="SUPFAM" id="SSF56762">
    <property type="entry name" value="HydB/Nqo4-like"/>
    <property type="match status" value="1"/>
</dbReference>
<dbReference type="PROSITE" id="PS00535">
    <property type="entry name" value="COMPLEX1_49K"/>
    <property type="match status" value="1"/>
</dbReference>
<keyword id="KW-0997">Cell inner membrane</keyword>
<keyword id="KW-1003">Cell membrane</keyword>
<keyword id="KW-0472">Membrane</keyword>
<keyword id="KW-0520">NAD</keyword>
<keyword id="KW-0874">Quinone</keyword>
<keyword id="KW-1278">Translocase</keyword>
<keyword id="KW-0813">Transport</keyword>
<keyword id="KW-0830">Ubiquinone</keyword>
<sequence length="396" mass="44672">MTEHNVRNFNINFGPQHPAAHGVLRLVLELDGEIVERVDPHIGLLHRGTEKLIEAKTYLQAIPYFDRLDYVAPMNQEHAFALAVERLTGTQVPIRGQLIRVLYSEIGRILSHLLNVTTQAMDVGALTPPLWGFEEREKLMVFYERACGARMHAAYFRPGGVHQDLPHQLVEDIGKWIDPFLKTVDDIDELLTGNRIFKQRNVDIGVVSLEDAWAWGFSGVMVRGSGAAWDLRRSQPYECYSDLEFDIPIGKNGDCFDRYLIRMIEMRESARIMRQCVDRLLGDAKVGPVSSLDGKIVPPKRGEMKRSMEALIHHFKLYTEGYHVPAGDVYAAVEAPKGEFGVYLVSDGTNKPYRCKIRAPGYAHLQAMDFLCRGHQLADVSAVLGSLDIVFGEVDR</sequence>
<accession>A6U7W6</accession>
<proteinExistence type="inferred from homology"/>
<reference key="1">
    <citation type="submission" date="2007-06" db="EMBL/GenBank/DDBJ databases">
        <title>Complete sequence of Sinorhizobium medicae WSM419 chromosome.</title>
        <authorList>
            <consortium name="US DOE Joint Genome Institute"/>
            <person name="Copeland A."/>
            <person name="Lucas S."/>
            <person name="Lapidus A."/>
            <person name="Barry K."/>
            <person name="Glavina del Rio T."/>
            <person name="Dalin E."/>
            <person name="Tice H."/>
            <person name="Pitluck S."/>
            <person name="Chain P."/>
            <person name="Malfatti S."/>
            <person name="Shin M."/>
            <person name="Vergez L."/>
            <person name="Schmutz J."/>
            <person name="Larimer F."/>
            <person name="Land M."/>
            <person name="Hauser L."/>
            <person name="Kyrpides N."/>
            <person name="Mikhailova N."/>
            <person name="Reeve W.G."/>
            <person name="Richardson P."/>
        </authorList>
    </citation>
    <scope>NUCLEOTIDE SEQUENCE [LARGE SCALE GENOMIC DNA]</scope>
    <source>
        <strain>WSM419</strain>
    </source>
</reference>
<name>NUOD1_SINMW</name>
<evidence type="ECO:0000255" key="1">
    <source>
        <dbReference type="HAMAP-Rule" id="MF_01358"/>
    </source>
</evidence>
<protein>
    <recommendedName>
        <fullName evidence="1">NADH-quinone oxidoreductase subunit D 1</fullName>
        <ecNumber evidence="1">7.1.1.-</ecNumber>
    </recommendedName>
    <alternativeName>
        <fullName evidence="1">NADH dehydrogenase I subunit D 1</fullName>
    </alternativeName>
    <alternativeName>
        <fullName evidence="1">NDH-1 subunit D 1</fullName>
    </alternativeName>
</protein>
<comment type="function">
    <text evidence="1">NDH-1 shuttles electrons from NADH, via FMN and iron-sulfur (Fe-S) centers, to quinones in the respiratory chain. The immediate electron acceptor for the enzyme in this species is believed to be ubiquinone. Couples the redox reaction to proton translocation (for every two electrons transferred, four hydrogen ions are translocated across the cytoplasmic membrane), and thus conserves the redox energy in a proton gradient.</text>
</comment>
<comment type="catalytic activity">
    <reaction evidence="1">
        <text>a quinone + NADH + 5 H(+)(in) = a quinol + NAD(+) + 4 H(+)(out)</text>
        <dbReference type="Rhea" id="RHEA:57888"/>
        <dbReference type="ChEBI" id="CHEBI:15378"/>
        <dbReference type="ChEBI" id="CHEBI:24646"/>
        <dbReference type="ChEBI" id="CHEBI:57540"/>
        <dbReference type="ChEBI" id="CHEBI:57945"/>
        <dbReference type="ChEBI" id="CHEBI:132124"/>
    </reaction>
</comment>
<comment type="subunit">
    <text evidence="1">NDH-1 is composed of 14 different subunits. Subunits NuoB, C, D, E, F, and G constitute the peripheral sector of the complex.</text>
</comment>
<comment type="subcellular location">
    <subcellularLocation>
        <location evidence="1">Cell inner membrane</location>
        <topology evidence="1">Peripheral membrane protein</topology>
        <orientation evidence="1">Cytoplasmic side</orientation>
    </subcellularLocation>
</comment>
<comment type="similarity">
    <text evidence="1">Belongs to the complex I 49 kDa subunit family.</text>
</comment>
<gene>
    <name evidence="1" type="primary">nuoD1</name>
    <name type="ordered locus">Smed_0891</name>
</gene>
<feature type="chain" id="PRO_0000357929" description="NADH-quinone oxidoreductase subunit D 1">
    <location>
        <begin position="1"/>
        <end position="396"/>
    </location>
</feature>